<proteinExistence type="evidence at transcript level"/>
<feature type="chain" id="PRO_0000312775" description="Alpha-actinin-4">
    <location>
        <begin position="1"/>
        <end position="911"/>
    </location>
</feature>
<feature type="domain" description="Calponin-homology (CH) 1" evidence="7">
    <location>
        <begin position="50"/>
        <end position="154"/>
    </location>
</feature>
<feature type="domain" description="Calponin-homology (CH) 2" evidence="7">
    <location>
        <begin position="163"/>
        <end position="269"/>
    </location>
</feature>
<feature type="repeat" description="Spectrin 1" evidence="6">
    <location>
        <begin position="293"/>
        <end position="403"/>
    </location>
</feature>
<feature type="repeat" description="Spectrin 2" evidence="6">
    <location>
        <begin position="413"/>
        <end position="518"/>
    </location>
</feature>
<feature type="repeat" description="Spectrin 3" evidence="6">
    <location>
        <begin position="528"/>
        <end position="639"/>
    </location>
</feature>
<feature type="repeat" description="Spectrin 4" evidence="6">
    <location>
        <begin position="649"/>
        <end position="752"/>
    </location>
</feature>
<feature type="domain" description="EF-hand 1" evidence="8">
    <location>
        <begin position="765"/>
        <end position="800"/>
    </location>
</feature>
<feature type="domain" description="EF-hand 2" evidence="8">
    <location>
        <begin position="806"/>
        <end position="841"/>
    </location>
</feature>
<feature type="region of interest" description="Actin-binding">
    <location>
        <begin position="1"/>
        <end position="269"/>
    </location>
</feature>
<feature type="region of interest" description="Disordered" evidence="9">
    <location>
        <begin position="8"/>
        <end position="31"/>
    </location>
</feature>
<feature type="region of interest" description="Interaction with VCL" evidence="1">
    <location>
        <begin position="12"/>
        <end position="26"/>
    </location>
</feature>
<feature type="region of interest" description="Interaction with VCL" evidence="1">
    <location>
        <begin position="40"/>
        <end position="61"/>
    </location>
</feature>
<feature type="region of interest" description="Interaction with VCL" evidence="1">
    <location>
        <begin position="108"/>
        <end position="126"/>
    </location>
</feature>
<feature type="region of interest" description="Polyphosphoinositide (PIP2)-binding" evidence="6">
    <location>
        <begin position="177"/>
        <end position="192"/>
    </location>
</feature>
<feature type="region of interest" description="Mediates interaction with MICALL2" evidence="3">
    <location>
        <begin position="736"/>
        <end position="911"/>
    </location>
</feature>
<feature type="short sequence motif" description="LXXLL motif" evidence="1">
    <location>
        <begin position="84"/>
        <end position="88"/>
    </location>
</feature>
<feature type="binding site" evidence="8">
    <location>
        <position position="778"/>
    </location>
    <ligand>
        <name>Ca(2+)</name>
        <dbReference type="ChEBI" id="CHEBI:29108"/>
    </ligand>
</feature>
<feature type="binding site" evidence="8">
    <location>
        <position position="780"/>
    </location>
    <ligand>
        <name>Ca(2+)</name>
        <dbReference type="ChEBI" id="CHEBI:29108"/>
    </ligand>
</feature>
<feature type="binding site" evidence="8">
    <location>
        <position position="789"/>
    </location>
    <ligand>
        <name>Ca(2+)</name>
        <dbReference type="ChEBI" id="CHEBI:29108"/>
    </ligand>
</feature>
<feature type="modified residue" description="Phosphotyrosine" evidence="2">
    <location>
        <position position="31"/>
    </location>
</feature>
<feature type="modified residue" description="N6-acetyllysine" evidence="1">
    <location>
        <position position="114"/>
    </location>
</feature>
<feature type="modified residue" description="N6-acetyllysine" evidence="2">
    <location>
        <position position="214"/>
    </location>
</feature>
<feature type="modified residue" description="Phosphothreonine" evidence="1">
    <location>
        <position position="249"/>
    </location>
</feature>
<feature type="modified residue" description="N6-acetyllysine" evidence="1">
    <location>
        <position position="592"/>
    </location>
</feature>
<feature type="modified residue" description="N6-acetyllysine" evidence="1">
    <location>
        <position position="625"/>
    </location>
</feature>
<feature type="modified residue" description="Phosphoserine" evidence="2">
    <location>
        <position position="696"/>
    </location>
</feature>
<feature type="modified residue" description="N6-acetyllysine" evidence="3">
    <location>
        <position position="779"/>
    </location>
</feature>
<feature type="modified residue" description="N6-acetyllysine" evidence="3">
    <location>
        <position position="859"/>
    </location>
</feature>
<feature type="modified residue" description="Phosphoserine" evidence="5">
    <location>
        <position position="909"/>
    </location>
</feature>
<name>ACTN4_BOVIN</name>
<accession>A5D7D1</accession>
<keyword id="KW-0007">Acetylation</keyword>
<keyword id="KW-0009">Actin-binding</keyword>
<keyword id="KW-0106">Calcium</keyword>
<keyword id="KW-0965">Cell junction</keyword>
<keyword id="KW-0963">Cytoplasm</keyword>
<keyword id="KW-0206">Cytoskeleton</keyword>
<keyword id="KW-0479">Metal-binding</keyword>
<keyword id="KW-0539">Nucleus</keyword>
<keyword id="KW-0597">Phosphoprotein</keyword>
<keyword id="KW-0653">Protein transport</keyword>
<keyword id="KW-1185">Reference proteome</keyword>
<keyword id="KW-0677">Repeat</keyword>
<keyword id="KW-0813">Transport</keyword>
<dbReference type="EMBL" id="BC140512">
    <property type="protein sequence ID" value="AAI40513.1"/>
    <property type="molecule type" value="mRNA"/>
</dbReference>
<dbReference type="RefSeq" id="NP_001091521.1">
    <property type="nucleotide sequence ID" value="NM_001098052.1"/>
</dbReference>
<dbReference type="BMRB" id="A5D7D1"/>
<dbReference type="SMR" id="A5D7D1"/>
<dbReference type="FunCoup" id="A5D7D1">
    <property type="interactions" value="2068"/>
</dbReference>
<dbReference type="IntAct" id="A5D7D1">
    <property type="interactions" value="2"/>
</dbReference>
<dbReference type="STRING" id="9913.ENSBTAP00000071047"/>
<dbReference type="PaxDb" id="9913-ENSBTAP00000014894"/>
<dbReference type="PeptideAtlas" id="A5D7D1"/>
<dbReference type="Ensembl" id="ENSBTAT00000086063.2">
    <property type="protein sequence ID" value="ENSBTAP00000060553.1"/>
    <property type="gene ID" value="ENSBTAG00000011215.7"/>
</dbReference>
<dbReference type="GeneID" id="522269"/>
<dbReference type="KEGG" id="bta:522269"/>
<dbReference type="CTD" id="81"/>
<dbReference type="VEuPathDB" id="HostDB:ENSBTAG00000011215"/>
<dbReference type="VGNC" id="VGNC:25583">
    <property type="gene designation" value="ACTN4"/>
</dbReference>
<dbReference type="eggNOG" id="KOG0035">
    <property type="taxonomic scope" value="Eukaryota"/>
</dbReference>
<dbReference type="GeneTree" id="ENSGT00940000159343"/>
<dbReference type="HOGENOM" id="CLU_005217_1_1_1"/>
<dbReference type="InParanoid" id="A5D7D1"/>
<dbReference type="OMA" id="KIADYNH"/>
<dbReference type="OrthoDB" id="10017054at2759"/>
<dbReference type="TreeFam" id="TF352676"/>
<dbReference type="Reactome" id="R-BTA-114608">
    <property type="pathway name" value="Platelet degranulation"/>
</dbReference>
<dbReference type="Proteomes" id="UP000009136">
    <property type="component" value="Chromosome 18"/>
</dbReference>
<dbReference type="Bgee" id="ENSBTAG00000011215">
    <property type="expression patterns" value="Expressed in placenta and 106 other cell types or tissues"/>
</dbReference>
<dbReference type="GO" id="GO:0070161">
    <property type="term" value="C:anchoring junction"/>
    <property type="evidence" value="ECO:0007669"/>
    <property type="project" value="UniProtKB-SubCell"/>
</dbReference>
<dbReference type="GO" id="GO:0030054">
    <property type="term" value="C:cell junction"/>
    <property type="evidence" value="ECO:0000318"/>
    <property type="project" value="GO_Central"/>
</dbReference>
<dbReference type="GO" id="GO:0042995">
    <property type="term" value="C:cell projection"/>
    <property type="evidence" value="ECO:0000318"/>
    <property type="project" value="GO_Central"/>
</dbReference>
<dbReference type="GO" id="GO:0030864">
    <property type="term" value="C:cortical actin cytoskeleton"/>
    <property type="evidence" value="ECO:0000318"/>
    <property type="project" value="GO_Central"/>
</dbReference>
<dbReference type="GO" id="GO:0005737">
    <property type="term" value="C:cytoplasm"/>
    <property type="evidence" value="ECO:0000250"/>
    <property type="project" value="UniProtKB"/>
</dbReference>
<dbReference type="GO" id="GO:0005634">
    <property type="term" value="C:nucleus"/>
    <property type="evidence" value="ECO:0000250"/>
    <property type="project" value="UniProtKB"/>
</dbReference>
<dbReference type="GO" id="GO:0048471">
    <property type="term" value="C:perinuclear region of cytoplasm"/>
    <property type="evidence" value="ECO:0000250"/>
    <property type="project" value="UniProtKB"/>
</dbReference>
<dbReference type="GO" id="GO:0005886">
    <property type="term" value="C:plasma membrane"/>
    <property type="evidence" value="ECO:0000318"/>
    <property type="project" value="GO_Central"/>
</dbReference>
<dbReference type="GO" id="GO:1990904">
    <property type="term" value="C:ribonucleoprotein complex"/>
    <property type="evidence" value="ECO:0000250"/>
    <property type="project" value="UniProtKB"/>
</dbReference>
<dbReference type="GO" id="GO:0001725">
    <property type="term" value="C:stress fiber"/>
    <property type="evidence" value="ECO:0007669"/>
    <property type="project" value="UniProtKB-SubCell"/>
</dbReference>
<dbReference type="GO" id="GO:0030018">
    <property type="term" value="C:Z disc"/>
    <property type="evidence" value="ECO:0000318"/>
    <property type="project" value="GO_Central"/>
</dbReference>
<dbReference type="GO" id="GO:0051015">
    <property type="term" value="F:actin filament binding"/>
    <property type="evidence" value="ECO:0000318"/>
    <property type="project" value="GO_Central"/>
</dbReference>
<dbReference type="GO" id="GO:0005509">
    <property type="term" value="F:calcium ion binding"/>
    <property type="evidence" value="ECO:0007669"/>
    <property type="project" value="InterPro"/>
</dbReference>
<dbReference type="GO" id="GO:0003713">
    <property type="term" value="F:transcription coactivator activity"/>
    <property type="evidence" value="ECO:0000250"/>
    <property type="project" value="UniProtKB"/>
</dbReference>
<dbReference type="GO" id="GO:0030036">
    <property type="term" value="P:actin cytoskeleton organization"/>
    <property type="evidence" value="ECO:0000318"/>
    <property type="project" value="GO_Central"/>
</dbReference>
<dbReference type="GO" id="GO:0055001">
    <property type="term" value="P:muscle cell development"/>
    <property type="evidence" value="ECO:0000318"/>
    <property type="project" value="GO_Central"/>
</dbReference>
<dbReference type="GO" id="GO:0035357">
    <property type="term" value="P:peroxisome proliferator activated receptor signaling pathway"/>
    <property type="evidence" value="ECO:0000250"/>
    <property type="project" value="UniProtKB"/>
</dbReference>
<dbReference type="GO" id="GO:0015031">
    <property type="term" value="P:protein transport"/>
    <property type="evidence" value="ECO:0007669"/>
    <property type="project" value="UniProtKB-KW"/>
</dbReference>
<dbReference type="GO" id="GO:0048384">
    <property type="term" value="P:retinoic acid receptor signaling pathway"/>
    <property type="evidence" value="ECO:0000250"/>
    <property type="project" value="UniProtKB"/>
</dbReference>
<dbReference type="CDD" id="cd21214">
    <property type="entry name" value="CH_ACTN_rpt1"/>
    <property type="match status" value="1"/>
</dbReference>
<dbReference type="CDD" id="cd21216">
    <property type="entry name" value="CH_ACTN_rpt2"/>
    <property type="match status" value="1"/>
</dbReference>
<dbReference type="CDD" id="cd00051">
    <property type="entry name" value="EFh"/>
    <property type="match status" value="1"/>
</dbReference>
<dbReference type="CDD" id="cd00176">
    <property type="entry name" value="SPEC"/>
    <property type="match status" value="3"/>
</dbReference>
<dbReference type="FunFam" id="1.10.238.10:FF:000004">
    <property type="entry name" value="Actinin alpha 1"/>
    <property type="match status" value="1"/>
</dbReference>
<dbReference type="FunFam" id="1.10.418.10:FF:000001">
    <property type="entry name" value="Actinin alpha 1"/>
    <property type="match status" value="1"/>
</dbReference>
<dbReference type="FunFam" id="1.20.58.60:FF:000004">
    <property type="entry name" value="Actinin alpha 1"/>
    <property type="match status" value="1"/>
</dbReference>
<dbReference type="FunFam" id="1.20.58.60:FF:000005">
    <property type="entry name" value="Actinin alpha 1"/>
    <property type="match status" value="1"/>
</dbReference>
<dbReference type="FunFam" id="1.10.238.10:FF:000156">
    <property type="entry name" value="Actinin alpha 4"/>
    <property type="match status" value="1"/>
</dbReference>
<dbReference type="FunFam" id="1.10.418.10:FF:000005">
    <property type="entry name" value="Actinin alpha 4"/>
    <property type="match status" value="1"/>
</dbReference>
<dbReference type="FunFam" id="1.20.58.60:FF:000002">
    <property type="entry name" value="Actinin, alpha 1"/>
    <property type="match status" value="1"/>
</dbReference>
<dbReference type="FunFam" id="1.20.58.60:FF:000003">
    <property type="entry name" value="Actinin, alpha 1"/>
    <property type="match status" value="1"/>
</dbReference>
<dbReference type="Gene3D" id="1.20.58.60">
    <property type="match status" value="4"/>
</dbReference>
<dbReference type="Gene3D" id="1.10.418.10">
    <property type="entry name" value="Calponin-like domain"/>
    <property type="match status" value="2"/>
</dbReference>
<dbReference type="Gene3D" id="1.10.238.10">
    <property type="entry name" value="EF-hand"/>
    <property type="match status" value="2"/>
</dbReference>
<dbReference type="InterPro" id="IPR001589">
    <property type="entry name" value="Actinin_actin-bd_CS"/>
</dbReference>
<dbReference type="InterPro" id="IPR001715">
    <property type="entry name" value="CH_dom"/>
</dbReference>
<dbReference type="InterPro" id="IPR036872">
    <property type="entry name" value="CH_dom_sf"/>
</dbReference>
<dbReference type="InterPro" id="IPR011992">
    <property type="entry name" value="EF-hand-dom_pair"/>
</dbReference>
<dbReference type="InterPro" id="IPR014837">
    <property type="entry name" value="EF-hand_Ca_insen"/>
</dbReference>
<dbReference type="InterPro" id="IPR018247">
    <property type="entry name" value="EF_Hand_1_Ca_BS"/>
</dbReference>
<dbReference type="InterPro" id="IPR002048">
    <property type="entry name" value="EF_hand_dom"/>
</dbReference>
<dbReference type="InterPro" id="IPR018159">
    <property type="entry name" value="Spectrin/alpha-actinin"/>
</dbReference>
<dbReference type="InterPro" id="IPR002017">
    <property type="entry name" value="Spectrin_repeat"/>
</dbReference>
<dbReference type="PANTHER" id="PTHR11915">
    <property type="entry name" value="SPECTRIN/FILAMIN RELATED CYTOSKELETAL PROTEIN"/>
    <property type="match status" value="1"/>
</dbReference>
<dbReference type="Pfam" id="PF00307">
    <property type="entry name" value="CH"/>
    <property type="match status" value="2"/>
</dbReference>
<dbReference type="Pfam" id="PF08726">
    <property type="entry name" value="EFhand_Ca_insen"/>
    <property type="match status" value="1"/>
</dbReference>
<dbReference type="Pfam" id="PF00435">
    <property type="entry name" value="Spectrin"/>
    <property type="match status" value="4"/>
</dbReference>
<dbReference type="SMART" id="SM00033">
    <property type="entry name" value="CH"/>
    <property type="match status" value="2"/>
</dbReference>
<dbReference type="SMART" id="SM00054">
    <property type="entry name" value="EFh"/>
    <property type="match status" value="2"/>
</dbReference>
<dbReference type="SMART" id="SM01184">
    <property type="entry name" value="efhand_Ca_insen"/>
    <property type="match status" value="1"/>
</dbReference>
<dbReference type="SMART" id="SM00150">
    <property type="entry name" value="SPEC"/>
    <property type="match status" value="4"/>
</dbReference>
<dbReference type="SUPFAM" id="SSF47576">
    <property type="entry name" value="Calponin-homology domain, CH-domain"/>
    <property type="match status" value="1"/>
</dbReference>
<dbReference type="SUPFAM" id="SSF47473">
    <property type="entry name" value="EF-hand"/>
    <property type="match status" value="1"/>
</dbReference>
<dbReference type="SUPFAM" id="SSF46966">
    <property type="entry name" value="Spectrin repeat"/>
    <property type="match status" value="4"/>
</dbReference>
<dbReference type="PROSITE" id="PS00019">
    <property type="entry name" value="ACTININ_1"/>
    <property type="match status" value="1"/>
</dbReference>
<dbReference type="PROSITE" id="PS00020">
    <property type="entry name" value="ACTININ_2"/>
    <property type="match status" value="1"/>
</dbReference>
<dbReference type="PROSITE" id="PS50021">
    <property type="entry name" value="CH"/>
    <property type="match status" value="2"/>
</dbReference>
<dbReference type="PROSITE" id="PS00018">
    <property type="entry name" value="EF_HAND_1"/>
    <property type="match status" value="1"/>
</dbReference>
<dbReference type="PROSITE" id="PS50222">
    <property type="entry name" value="EF_HAND_2"/>
    <property type="match status" value="2"/>
</dbReference>
<organism>
    <name type="scientific">Bos taurus</name>
    <name type="common">Bovine</name>
    <dbReference type="NCBI Taxonomy" id="9913"/>
    <lineage>
        <taxon>Eukaryota</taxon>
        <taxon>Metazoa</taxon>
        <taxon>Chordata</taxon>
        <taxon>Craniata</taxon>
        <taxon>Vertebrata</taxon>
        <taxon>Euteleostomi</taxon>
        <taxon>Mammalia</taxon>
        <taxon>Eutheria</taxon>
        <taxon>Laurasiatheria</taxon>
        <taxon>Artiodactyla</taxon>
        <taxon>Ruminantia</taxon>
        <taxon>Pecora</taxon>
        <taxon>Bovidae</taxon>
        <taxon>Bovinae</taxon>
        <taxon>Bos</taxon>
    </lineage>
</organism>
<evidence type="ECO:0000250" key="1">
    <source>
        <dbReference type="UniProtKB" id="O43707"/>
    </source>
</evidence>
<evidence type="ECO:0000250" key="2">
    <source>
        <dbReference type="UniProtKB" id="P12814"/>
    </source>
</evidence>
<evidence type="ECO:0000250" key="3">
    <source>
        <dbReference type="UniProtKB" id="P57780"/>
    </source>
</evidence>
<evidence type="ECO:0000250" key="4">
    <source>
        <dbReference type="UniProtKB" id="Q9QXQ0"/>
    </source>
</evidence>
<evidence type="ECO:0000250" key="5">
    <source>
        <dbReference type="UniProtKB" id="Q9Z1P2"/>
    </source>
</evidence>
<evidence type="ECO:0000255" key="6"/>
<evidence type="ECO:0000255" key="7">
    <source>
        <dbReference type="PROSITE-ProRule" id="PRU00044"/>
    </source>
</evidence>
<evidence type="ECO:0000255" key="8">
    <source>
        <dbReference type="PROSITE-ProRule" id="PRU00448"/>
    </source>
</evidence>
<evidence type="ECO:0000256" key="9">
    <source>
        <dbReference type="SAM" id="MobiDB-lite"/>
    </source>
</evidence>
<evidence type="ECO:0000305" key="10"/>
<gene>
    <name evidence="10" type="primary">ACTN4</name>
</gene>
<reference key="1">
    <citation type="submission" date="2007-04" db="EMBL/GenBank/DDBJ databases">
        <authorList>
            <consortium name="NIH - Mammalian Gene Collection (MGC) project"/>
        </authorList>
    </citation>
    <scope>NUCLEOTIDE SEQUENCE [LARGE SCALE MRNA]</scope>
    <source>
        <strain>Hereford</strain>
        <tissue>Ascending colon</tissue>
    </source>
</reference>
<sequence length="911" mass="104928">MVDYHAANQSYQYGPSSGSNGAGGGGTMGDYMAQEDDWDRDLLLDPAWEKQQRKTFTAWCNSHLRKAGTQIENIDEDFRDGLKLMLLLEVISGERLPKPERGKMRVHKINNVNKALDFIASKGVKLVSIGAEEIVDGNAKMTLGMIWTIILRFAIQDISVEETSAKEGLLLWCQRKTAPYKNVNVQNFHISWKDGLAFNALIHRHRPELIEYDKLRKDDPVTNLNNAFEVAEKYLDIPKMLDAEDIVNTARPDEKAIMTYVSSFYHAFSGAQKAETAANRICKVLAVNQENEHLMEDYERLASDLLEWIRRTIPWLEDRVPQKTIQEMQQKLEDFRDYRRVHKPPKVQEKCQLEINFNTLQTKLRLSNRPAFMPSEGKMVSDINNGWQHLEQAEKGYEEWLLNEIRRLERLDHLAEKFRQKASIHEAWTDGKEAMLKHRDYETATLSDIKALIRKHEAFESDLAAHQDRVEQIAAIAQELNELDYYDSHNVNTRCQKICDQWDALGSLTHSRREALEKTEKQLETIDQLHLEYAKRAAPFNNWMESAMEDLQDMFIVHTIEEIEGLISAHDQFKSTLPDADREREAILAIHKEAQRIAESNHIKLSGSNPYTTVTPQIINSKWEKVQQLVPKRDHALLEEQSKQQSNEHLRRQFASQANIVGPWIQTKMEEIGRISIEMNGTLEDQLSHLKQYERSIVDYKPNLDLLEQQHQLIQEALIFDNKHTNYTMEHIRVGWEQLLTTIARTINEVENQILTRDAKGISQEQMQEFRASFNHFDKDHGGALGPEEFKACLISLGYDVENDRQGDAEFNRIMSVVDPNHSGLVTFQAFIDFMSRETTDTDTADQVIASFKVLAGDKNFITAEELRRELPPDQAEYCIARMAPYQGPDAVPGALDYKSFSTALYGESDL</sequence>
<comment type="function">
    <text evidence="1">F-actin cross-linking protein which is thought to anchor actin to a variety of intracellular structures. This is a bundling protein. Probably involved in vesicular trafficking via its association with the CART complex. The CART complex is necessary for efficient transferrin receptor recycling but not for EGFR degradation. Involved in tight junction assembly in epithelial cells probably through interaction with MICALL2. Links MICALL2 to the actin cytoskeleton and recruits it to the tight junctions. May also function as a transcriptional coactivator, stimulating transcription mediated by the nuclear hormone receptors PPARG and RARA. Association with IGSF8 regulates the immune synapse formation and is required for efficient T-cell activation.</text>
</comment>
<comment type="subunit">
    <text evidence="1 3 4">Homodimer; antiparallel. Identified in a IGF2BP1-dependent mRNP granule complex containing untranslated mRNAs (By similarity). Component of the CART complex, at least composed of ACTN4, HGS/HRS, MYO5B and TRIM3 (By similarity). Binds TRIM3 at the N-terminus (By similarity). Interacts with MAGI1 (By similarity). Interacts with PDLIM2 (By similarity). Identified in a complex with CASK, IQGAP1, MAGI2, NPHS1, SPTAN1 and SPTBN1 (By similarity). Interacts with MICALL2 (preferentially in opened conformation); stimulated by RAB13 activation. Interacts with PPARG and RARA (By similarity). Binds to VCL; this interaction triggers VCL conformational changes (By similarity). Interacts with SEPTIN14 (By similarity). Interacts with IGSF8 (By similarity).</text>
</comment>
<comment type="subcellular location">
    <subcellularLocation>
        <location evidence="1">Nucleus</location>
    </subcellularLocation>
    <subcellularLocation>
        <location evidence="1">Cytoplasm</location>
    </subcellularLocation>
    <subcellularLocation>
        <location evidence="3">Cell junction</location>
    </subcellularLocation>
    <subcellularLocation>
        <location evidence="1">Cytoplasm</location>
        <location evidence="1">Cytoskeleton</location>
        <location evidence="1">Stress fiber</location>
    </subcellularLocation>
    <subcellularLocation>
        <location evidence="3">Cytoplasm</location>
        <location evidence="3">Perinuclear region</location>
    </subcellularLocation>
    <text evidence="1 3">Localized in cytoplasmic mRNP granules containing untranslated mRNAs. Expressed in the perinuclear rim and manchette structure in early elongating spermatids during spermiogenesis (By similarity).</text>
</comment>
<comment type="domain">
    <text evidence="1">Contains one Leu-Xaa-Xaa-Leu-Leu (LXXLL) motif that mediates interaction with nuclear receptors.</text>
</comment>
<comment type="similarity">
    <text evidence="10">Belongs to the alpha-actinin family.</text>
</comment>
<protein>
    <recommendedName>
        <fullName evidence="10">Alpha-actinin-4</fullName>
    </recommendedName>
    <alternativeName>
        <fullName evidence="10">Non-muscle alpha-actinin 4</fullName>
    </alternativeName>
</protein>